<proteinExistence type="inferred from homology"/>
<sequence length="782" mass="83581">MTATSPFSPQEIAAEGIKPEEYAEIVRRLGRHPNKAELGMFGVMWSEHCCYKNSRPLLKQFPTTGPRILVGPGENAGVVDLGEGLQLAFKIESHNHPSAVEPFQGAATGVGGILRDIFTMGARPIALLNSLRFGSLEDPKTQRLFSGVVAGISHYGNCVGVPTVGGEVYFDPAYSGNPLVNVMALGLMETPEIVKSGAAGIGNPVLYVGSTTGRDGMGGASFASAELSDESIDDRPAVQVGDPFLEKSLIEACLEAFKTGAVVAAQDMGAAGITCSTSEMAAKGGVGIELDLDKIPVRETRMVPYEYLLSESQERMLFVAHQGREQELIDIFHRWGLQAVVAGTVIAEPIVRIFFQGAIAAEIPADALAENTPLYERELLAEPPEYARLAWEWSSEALPTGTTAGIEIQGNLHSWQDILLTLLNTPTIASKNWVYRQYDHQVQNNTVFLPGGADAAVVRLRPLEGQGSRGAGEQGGVNSLSGVAATVDCNPRYVYLDPYEGAKAVVAEAARNLSCVGAEPLAVTDNLNFGSPEKPIGYWQLSEACRGLAEGCRELATPVTGGNVSLYNETFDTQGNPQPIYPTPVVGMVGLIADLTKICGQGWQGVGDVIYLLGASITTLGASEYLATIHNTVAGRPPRVDFDLERRVQKVCREGIHAGSVRSAHDCAEGGLAVALAESCLAGNLGAEIHLEVSPTQLQRLDEVLFGEGGARILVSVVSTQQATWESYLQEHLGQNWQKLGIVGNTDTDLAVLTTDNQTLIRVSIEEMNDRYQNAIARRLAL</sequence>
<organism>
    <name type="scientific">Nostoc sp. (strain PCC 7120 / SAG 25.82 / UTEX 2576)</name>
    <dbReference type="NCBI Taxonomy" id="103690"/>
    <lineage>
        <taxon>Bacteria</taxon>
        <taxon>Bacillati</taxon>
        <taxon>Cyanobacteriota</taxon>
        <taxon>Cyanophyceae</taxon>
        <taxon>Nostocales</taxon>
        <taxon>Nostocaceae</taxon>
        <taxon>Nostoc</taxon>
    </lineage>
</organism>
<name>PURL_NOSS1</name>
<protein>
    <recommendedName>
        <fullName evidence="1">Phosphoribosylformylglycinamidine synthase subunit PurL</fullName>
        <shortName evidence="1">FGAM synthase</shortName>
        <ecNumber evidence="1">6.3.5.3</ecNumber>
    </recommendedName>
    <alternativeName>
        <fullName evidence="1">Formylglycinamide ribonucleotide amidotransferase subunit II</fullName>
        <shortName evidence="1">FGAR amidotransferase II</shortName>
        <shortName evidence="1">FGAR-AT II</shortName>
    </alternativeName>
    <alternativeName>
        <fullName evidence="1">Glutamine amidotransferase PurL</fullName>
    </alternativeName>
    <alternativeName>
        <fullName evidence="1">Phosphoribosylformylglycinamidine synthase subunit II</fullName>
    </alternativeName>
</protein>
<reference key="1">
    <citation type="journal article" date="2001" name="DNA Res.">
        <title>Complete genomic sequence of the filamentous nitrogen-fixing cyanobacterium Anabaena sp. strain PCC 7120.</title>
        <authorList>
            <person name="Kaneko T."/>
            <person name="Nakamura Y."/>
            <person name="Wolk C.P."/>
            <person name="Kuritz T."/>
            <person name="Sasamoto S."/>
            <person name="Watanabe A."/>
            <person name="Iriguchi M."/>
            <person name="Ishikawa A."/>
            <person name="Kawashima K."/>
            <person name="Kimura T."/>
            <person name="Kishida Y."/>
            <person name="Kohara M."/>
            <person name="Matsumoto M."/>
            <person name="Matsuno A."/>
            <person name="Muraki A."/>
            <person name="Nakazaki N."/>
            <person name="Shimpo S."/>
            <person name="Sugimoto M."/>
            <person name="Takazawa M."/>
            <person name="Yamada M."/>
            <person name="Yasuda M."/>
            <person name="Tabata S."/>
        </authorList>
    </citation>
    <scope>NUCLEOTIDE SEQUENCE [LARGE SCALE GENOMIC DNA]</scope>
    <source>
        <strain>PCC 7120 / SAG 25.82 / UTEX 2576</strain>
    </source>
</reference>
<gene>
    <name evidence="1" type="primary">purL</name>
    <name type="ordered locus">all3652</name>
</gene>
<dbReference type="EC" id="6.3.5.3" evidence="1"/>
<dbReference type="EMBL" id="BA000019">
    <property type="protein sequence ID" value="BAB75351.1"/>
    <property type="molecule type" value="Genomic_DNA"/>
</dbReference>
<dbReference type="PIR" id="AE2262">
    <property type="entry name" value="AE2262"/>
</dbReference>
<dbReference type="RefSeq" id="WP_010997796.1">
    <property type="nucleotide sequence ID" value="NZ_RSCN01000044.1"/>
</dbReference>
<dbReference type="SMR" id="Q8YR06"/>
<dbReference type="STRING" id="103690.gene:10495694"/>
<dbReference type="KEGG" id="ana:all3652"/>
<dbReference type="eggNOG" id="COG0046">
    <property type="taxonomic scope" value="Bacteria"/>
</dbReference>
<dbReference type="OrthoDB" id="9804441at2"/>
<dbReference type="UniPathway" id="UPA00074">
    <property type="reaction ID" value="UER00128"/>
</dbReference>
<dbReference type="Proteomes" id="UP000002483">
    <property type="component" value="Chromosome"/>
</dbReference>
<dbReference type="GO" id="GO:0005737">
    <property type="term" value="C:cytoplasm"/>
    <property type="evidence" value="ECO:0007669"/>
    <property type="project" value="UniProtKB-SubCell"/>
</dbReference>
<dbReference type="GO" id="GO:0005524">
    <property type="term" value="F:ATP binding"/>
    <property type="evidence" value="ECO:0007669"/>
    <property type="project" value="UniProtKB-UniRule"/>
</dbReference>
<dbReference type="GO" id="GO:0000287">
    <property type="term" value="F:magnesium ion binding"/>
    <property type="evidence" value="ECO:0007669"/>
    <property type="project" value="UniProtKB-UniRule"/>
</dbReference>
<dbReference type="GO" id="GO:0004642">
    <property type="term" value="F:phosphoribosylformylglycinamidine synthase activity"/>
    <property type="evidence" value="ECO:0007669"/>
    <property type="project" value="UniProtKB-UniRule"/>
</dbReference>
<dbReference type="GO" id="GO:0006189">
    <property type="term" value="P:'de novo' IMP biosynthetic process"/>
    <property type="evidence" value="ECO:0007669"/>
    <property type="project" value="UniProtKB-UniRule"/>
</dbReference>
<dbReference type="CDD" id="cd02203">
    <property type="entry name" value="PurL_repeat1"/>
    <property type="match status" value="1"/>
</dbReference>
<dbReference type="CDD" id="cd02204">
    <property type="entry name" value="PurL_repeat2"/>
    <property type="match status" value="1"/>
</dbReference>
<dbReference type="FunFam" id="3.30.1330.10:FF:000004">
    <property type="entry name" value="Phosphoribosylformylglycinamidine synthase subunit PurL"/>
    <property type="match status" value="1"/>
</dbReference>
<dbReference type="Gene3D" id="3.90.650.10">
    <property type="entry name" value="PurM-like C-terminal domain"/>
    <property type="match status" value="2"/>
</dbReference>
<dbReference type="Gene3D" id="3.30.1330.10">
    <property type="entry name" value="PurM-like, N-terminal domain"/>
    <property type="match status" value="2"/>
</dbReference>
<dbReference type="HAMAP" id="MF_00420">
    <property type="entry name" value="PurL_2"/>
    <property type="match status" value="1"/>
</dbReference>
<dbReference type="InterPro" id="IPR010074">
    <property type="entry name" value="PRibForGlyAmidine_synth_PurL"/>
</dbReference>
<dbReference type="InterPro" id="IPR041609">
    <property type="entry name" value="PurL_linker"/>
</dbReference>
<dbReference type="InterPro" id="IPR010918">
    <property type="entry name" value="PurM-like_C_dom"/>
</dbReference>
<dbReference type="InterPro" id="IPR036676">
    <property type="entry name" value="PurM-like_C_sf"/>
</dbReference>
<dbReference type="InterPro" id="IPR016188">
    <property type="entry name" value="PurM-like_N"/>
</dbReference>
<dbReference type="InterPro" id="IPR036921">
    <property type="entry name" value="PurM-like_N_sf"/>
</dbReference>
<dbReference type="NCBIfam" id="TIGR01736">
    <property type="entry name" value="FGAM_synth_II"/>
    <property type="match status" value="1"/>
</dbReference>
<dbReference type="NCBIfam" id="NF002290">
    <property type="entry name" value="PRK01213.1"/>
    <property type="match status" value="1"/>
</dbReference>
<dbReference type="PANTHER" id="PTHR43555">
    <property type="entry name" value="PHOSPHORIBOSYLFORMYLGLYCINAMIDINE SYNTHASE SUBUNIT PURL"/>
    <property type="match status" value="1"/>
</dbReference>
<dbReference type="PANTHER" id="PTHR43555:SF1">
    <property type="entry name" value="PHOSPHORIBOSYLFORMYLGLYCINAMIDINE SYNTHASE SUBUNIT PURL"/>
    <property type="match status" value="1"/>
</dbReference>
<dbReference type="Pfam" id="PF00586">
    <property type="entry name" value="AIRS"/>
    <property type="match status" value="2"/>
</dbReference>
<dbReference type="Pfam" id="PF02769">
    <property type="entry name" value="AIRS_C"/>
    <property type="match status" value="2"/>
</dbReference>
<dbReference type="Pfam" id="PF18072">
    <property type="entry name" value="FGAR-AT_linker"/>
    <property type="match status" value="1"/>
</dbReference>
<dbReference type="PIRSF" id="PIRSF001587">
    <property type="entry name" value="FGAM_synthase_II"/>
    <property type="match status" value="1"/>
</dbReference>
<dbReference type="SUPFAM" id="SSF56042">
    <property type="entry name" value="PurM C-terminal domain-like"/>
    <property type="match status" value="2"/>
</dbReference>
<dbReference type="SUPFAM" id="SSF55326">
    <property type="entry name" value="PurM N-terminal domain-like"/>
    <property type="match status" value="2"/>
</dbReference>
<accession>Q8YR06</accession>
<evidence type="ECO:0000255" key="1">
    <source>
        <dbReference type="HAMAP-Rule" id="MF_00420"/>
    </source>
</evidence>
<keyword id="KW-0067">ATP-binding</keyword>
<keyword id="KW-0963">Cytoplasm</keyword>
<keyword id="KW-0436">Ligase</keyword>
<keyword id="KW-0460">Magnesium</keyword>
<keyword id="KW-0479">Metal-binding</keyword>
<keyword id="KW-0547">Nucleotide-binding</keyword>
<keyword id="KW-0658">Purine biosynthesis</keyword>
<keyword id="KW-1185">Reference proteome</keyword>
<feature type="chain" id="PRO_0000100430" description="Phosphoribosylformylglycinamidine synthase subunit PurL">
    <location>
        <begin position="1"/>
        <end position="782"/>
    </location>
</feature>
<feature type="active site" evidence="1">
    <location>
        <position position="48"/>
    </location>
</feature>
<feature type="active site" description="Proton acceptor" evidence="1">
    <location>
        <position position="94"/>
    </location>
</feature>
<feature type="binding site" evidence="1">
    <location>
        <position position="51"/>
    </location>
    <ligand>
        <name>ATP</name>
        <dbReference type="ChEBI" id="CHEBI:30616"/>
    </ligand>
</feature>
<feature type="binding site" evidence="1">
    <location>
        <position position="90"/>
    </location>
    <ligand>
        <name>ATP</name>
        <dbReference type="ChEBI" id="CHEBI:30616"/>
    </ligand>
</feature>
<feature type="binding site" evidence="1">
    <location>
        <position position="92"/>
    </location>
    <ligand>
        <name>Mg(2+)</name>
        <dbReference type="ChEBI" id="CHEBI:18420"/>
        <label>1</label>
    </ligand>
</feature>
<feature type="binding site" evidence="1">
    <location>
        <begin position="93"/>
        <end position="96"/>
    </location>
    <ligand>
        <name>substrate</name>
    </ligand>
</feature>
<feature type="binding site" evidence="1">
    <location>
        <position position="115"/>
    </location>
    <ligand>
        <name>substrate</name>
    </ligand>
</feature>
<feature type="binding site" evidence="1">
    <location>
        <position position="116"/>
    </location>
    <ligand>
        <name>Mg(2+)</name>
        <dbReference type="ChEBI" id="CHEBI:18420"/>
        <label>2</label>
    </ligand>
</feature>
<feature type="binding site" evidence="1">
    <location>
        <position position="239"/>
    </location>
    <ligand>
        <name>substrate</name>
    </ligand>
</feature>
<feature type="binding site" evidence="1">
    <location>
        <position position="267"/>
    </location>
    <ligand>
        <name>Mg(2+)</name>
        <dbReference type="ChEBI" id="CHEBI:18420"/>
        <label>2</label>
    </ligand>
</feature>
<feature type="binding site" evidence="1">
    <location>
        <begin position="311"/>
        <end position="313"/>
    </location>
    <ligand>
        <name>substrate</name>
    </ligand>
</feature>
<feature type="binding site" evidence="1">
    <location>
        <position position="525"/>
    </location>
    <ligand>
        <name>ATP</name>
        <dbReference type="ChEBI" id="CHEBI:30616"/>
    </ligand>
</feature>
<feature type="binding site" evidence="1">
    <location>
        <position position="562"/>
    </location>
    <ligand>
        <name>ATP</name>
        <dbReference type="ChEBI" id="CHEBI:30616"/>
    </ligand>
</feature>
<feature type="binding site" evidence="1">
    <location>
        <position position="563"/>
    </location>
    <ligand>
        <name>Mg(2+)</name>
        <dbReference type="ChEBI" id="CHEBI:18420"/>
        <label>1</label>
    </ligand>
</feature>
<feature type="binding site" evidence="1">
    <location>
        <position position="565"/>
    </location>
    <ligand>
        <name>substrate</name>
    </ligand>
</feature>
<comment type="function">
    <text evidence="1">Part of the phosphoribosylformylglycinamidine synthase complex involved in the purines biosynthetic pathway. Catalyzes the ATP-dependent conversion of formylglycinamide ribonucleotide (FGAR) and glutamine to yield formylglycinamidine ribonucleotide (FGAM) and glutamate. The FGAM synthase complex is composed of three subunits. PurQ produces an ammonia molecule by converting glutamine to glutamate. PurL transfers the ammonia molecule to FGAR to form FGAM in an ATP-dependent manner. PurS interacts with PurQ and PurL and is thought to assist in the transfer of the ammonia molecule from PurQ to PurL.</text>
</comment>
<comment type="catalytic activity">
    <reaction evidence="1">
        <text>N(2)-formyl-N(1)-(5-phospho-beta-D-ribosyl)glycinamide + L-glutamine + ATP + H2O = 2-formamido-N(1)-(5-O-phospho-beta-D-ribosyl)acetamidine + L-glutamate + ADP + phosphate + H(+)</text>
        <dbReference type="Rhea" id="RHEA:17129"/>
        <dbReference type="ChEBI" id="CHEBI:15377"/>
        <dbReference type="ChEBI" id="CHEBI:15378"/>
        <dbReference type="ChEBI" id="CHEBI:29985"/>
        <dbReference type="ChEBI" id="CHEBI:30616"/>
        <dbReference type="ChEBI" id="CHEBI:43474"/>
        <dbReference type="ChEBI" id="CHEBI:58359"/>
        <dbReference type="ChEBI" id="CHEBI:147286"/>
        <dbReference type="ChEBI" id="CHEBI:147287"/>
        <dbReference type="ChEBI" id="CHEBI:456216"/>
        <dbReference type="EC" id="6.3.5.3"/>
    </reaction>
</comment>
<comment type="pathway">
    <text evidence="1">Purine metabolism; IMP biosynthesis via de novo pathway; 5-amino-1-(5-phospho-D-ribosyl)imidazole from N(2)-formyl-N(1)-(5-phospho-D-ribosyl)glycinamide: step 1/2.</text>
</comment>
<comment type="subunit">
    <text evidence="1">Monomer. Part of the FGAM synthase complex composed of 1 PurL, 1 PurQ and 2 PurS subunits.</text>
</comment>
<comment type="subcellular location">
    <subcellularLocation>
        <location evidence="1">Cytoplasm</location>
    </subcellularLocation>
</comment>
<comment type="similarity">
    <text evidence="1">Belongs to the FGAMS family.</text>
</comment>